<organism>
    <name type="scientific">Dendronephthya klunzingeri</name>
    <name type="common">Klunzinger's soft coral</name>
    <dbReference type="NCBI Taxonomy" id="84964"/>
    <lineage>
        <taxon>Eukaryota</taxon>
        <taxon>Metazoa</taxon>
        <taxon>Cnidaria</taxon>
        <taxon>Anthozoa</taxon>
        <taxon>Octocorallia</taxon>
        <taxon>Malacalcyonacea</taxon>
        <taxon>Nephtheidae</taxon>
        <taxon>Dendronephthya</taxon>
    </lineage>
</organism>
<evidence type="ECO:0000250" key="1"/>
<evidence type="ECO:0000250" key="2">
    <source>
        <dbReference type="UniProtKB" id="P62805"/>
    </source>
</evidence>
<evidence type="ECO:0000256" key="3">
    <source>
        <dbReference type="SAM" id="MobiDB-lite"/>
    </source>
</evidence>
<evidence type="ECO:0000305" key="4"/>
<dbReference type="EMBL" id="Y18815">
    <property type="protein sequence ID" value="CAC80129.1"/>
    <property type="molecule type" value="mRNA"/>
</dbReference>
<dbReference type="SMR" id="Q6LAF1"/>
<dbReference type="GO" id="GO:0000786">
    <property type="term" value="C:nucleosome"/>
    <property type="evidence" value="ECO:0007669"/>
    <property type="project" value="UniProtKB-KW"/>
</dbReference>
<dbReference type="GO" id="GO:0005634">
    <property type="term" value="C:nucleus"/>
    <property type="evidence" value="ECO:0007669"/>
    <property type="project" value="UniProtKB-SubCell"/>
</dbReference>
<dbReference type="GO" id="GO:0003677">
    <property type="term" value="F:DNA binding"/>
    <property type="evidence" value="ECO:0007669"/>
    <property type="project" value="UniProtKB-KW"/>
</dbReference>
<dbReference type="GO" id="GO:0046982">
    <property type="term" value="F:protein heterodimerization activity"/>
    <property type="evidence" value="ECO:0007669"/>
    <property type="project" value="InterPro"/>
</dbReference>
<dbReference type="GO" id="GO:0030527">
    <property type="term" value="F:structural constituent of chromatin"/>
    <property type="evidence" value="ECO:0007669"/>
    <property type="project" value="InterPro"/>
</dbReference>
<dbReference type="CDD" id="cd22912">
    <property type="entry name" value="HFD_H4"/>
    <property type="match status" value="1"/>
</dbReference>
<dbReference type="FunFam" id="1.10.20.10:FF:000002">
    <property type="entry name" value="Histone H4"/>
    <property type="match status" value="1"/>
</dbReference>
<dbReference type="Gene3D" id="1.10.20.10">
    <property type="entry name" value="Histone, subunit A"/>
    <property type="match status" value="1"/>
</dbReference>
<dbReference type="InterPro" id="IPR035425">
    <property type="entry name" value="CENP-T/H4_C"/>
</dbReference>
<dbReference type="InterPro" id="IPR009072">
    <property type="entry name" value="Histone-fold"/>
</dbReference>
<dbReference type="InterPro" id="IPR001951">
    <property type="entry name" value="Histone_H4"/>
</dbReference>
<dbReference type="InterPro" id="IPR019809">
    <property type="entry name" value="Histone_H4_CS"/>
</dbReference>
<dbReference type="InterPro" id="IPR004823">
    <property type="entry name" value="TAF_TATA-bd_Histone-like_dom"/>
</dbReference>
<dbReference type="PANTHER" id="PTHR10484">
    <property type="entry name" value="HISTONE H4"/>
    <property type="match status" value="1"/>
</dbReference>
<dbReference type="Pfam" id="PF15511">
    <property type="entry name" value="CENP-T_C"/>
    <property type="match status" value="1"/>
</dbReference>
<dbReference type="PRINTS" id="PR00623">
    <property type="entry name" value="HISTONEH4"/>
</dbReference>
<dbReference type="SMART" id="SM00417">
    <property type="entry name" value="H4"/>
    <property type="match status" value="1"/>
</dbReference>
<dbReference type="SMART" id="SM00803">
    <property type="entry name" value="TAF"/>
    <property type="match status" value="1"/>
</dbReference>
<dbReference type="SUPFAM" id="SSF47113">
    <property type="entry name" value="Histone-fold"/>
    <property type="match status" value="1"/>
</dbReference>
<dbReference type="PROSITE" id="PS00047">
    <property type="entry name" value="HISTONE_H4"/>
    <property type="match status" value="1"/>
</dbReference>
<reference key="1">
    <citation type="submission" date="1999-02" db="EMBL/GenBank/DDBJ databases">
        <title>Cell culture from the octocorals Dednronephya klunzinger and Anthelia glauca: application for monitoring of environmental stress.</title>
        <authorList>
            <person name="Gundacker D."/>
            <person name="Wiens M."/>
            <person name="Eisinger M."/>
            <person name="Steffen R."/>
            <person name="Batel R."/>
            <person name="Mueller I.M."/>
            <person name="Mueller W.E.G."/>
        </authorList>
    </citation>
    <scope>NUCLEOTIDE SEQUENCE [MRNA]</scope>
</reference>
<name>H4_DENKL</name>
<sequence length="103" mass="11381">MSGRGKGGKGLGKGGAKRHRKILRDNIQGITKPAIRRLARRGGVKRISGLIYEETRGVLKVFLENVIRDAVTYTEHAKRKTVTAMDVVYALKRQGRTLYGFGG</sequence>
<accession>Q6LAF1</accession>
<gene>
    <name type="primary">H4DEKL</name>
</gene>
<proteinExistence type="inferred from homology"/>
<feature type="initiator methionine" description="Removed" evidence="1">
    <location>
        <position position="1"/>
    </location>
</feature>
<feature type="chain" id="PRO_0000158300" description="Histone H4">
    <location>
        <begin position="2"/>
        <end position="103"/>
    </location>
</feature>
<feature type="DNA-binding region">
    <location>
        <begin position="17"/>
        <end position="21"/>
    </location>
</feature>
<feature type="region of interest" description="Disordered" evidence="3">
    <location>
        <begin position="1"/>
        <end position="20"/>
    </location>
</feature>
<feature type="compositionally biased region" description="Gly residues" evidence="3">
    <location>
        <begin position="1"/>
        <end position="14"/>
    </location>
</feature>
<feature type="modified residue" description="N-acetylserine" evidence="1">
    <location>
        <position position="2"/>
    </location>
</feature>
<feature type="modified residue" description="N6-acetyl-N6-methyllysine; alternate" evidence="2">
    <location>
        <position position="6"/>
    </location>
</feature>
<feature type="modified residue" description="N6-acetyl-N6-methyllysine; alternate" evidence="2">
    <location>
        <position position="13"/>
    </location>
</feature>
<feature type="modified residue" description="N6-acetyllysine" evidence="1">
    <location>
        <position position="17"/>
    </location>
</feature>
<feature type="modified residue" description="N6-methyllysine" evidence="1">
    <location>
        <position position="21"/>
    </location>
</feature>
<keyword id="KW-0007">Acetylation</keyword>
<keyword id="KW-0158">Chromosome</keyword>
<keyword id="KW-0238">DNA-binding</keyword>
<keyword id="KW-0488">Methylation</keyword>
<keyword id="KW-0544">Nucleosome core</keyword>
<keyword id="KW-0539">Nucleus</keyword>
<comment type="function">
    <text>Core component of nucleosome. Nucleosomes wrap and compact DNA into chromatin, limiting DNA accessibility to the cellular machineries which require DNA as a template. Histones thereby play a central role in transcription regulation, DNA repair, DNA replication and chromosomal stability. DNA accessibility is regulated via a complex set of post-translational modifications of histones, also called histone code, and nucleosome remodeling.</text>
</comment>
<comment type="subunit">
    <text>The nucleosome is a histone octamer containing two molecules each of H2A, H2B, H3 and H4 assembled in one H3-H4 heterotetramer and two H2A-H2B heterodimers. The octamer wraps approximately 147 bp of DNA.</text>
</comment>
<comment type="subcellular location">
    <subcellularLocation>
        <location evidence="1">Nucleus</location>
    </subcellularLocation>
    <subcellularLocation>
        <location evidence="1">Chromosome</location>
    </subcellularLocation>
</comment>
<comment type="similarity">
    <text evidence="4">Belongs to the histone H4 family.</text>
</comment>
<protein>
    <recommendedName>
        <fullName>Histone H4</fullName>
    </recommendedName>
</protein>